<reference key="1">
    <citation type="submission" date="1996-08" db="EMBL/GenBank/DDBJ databases">
        <authorList>
            <person name="van Wormhoudt A."/>
        </authorList>
    </citation>
    <scope>NUCLEOTIDE SEQUENCE [MRNA]</scope>
    <source>
        <tissue>Eyestalk</tissue>
    </source>
</reference>
<reference key="2">
    <citation type="journal article" date="1996" name="Gen. Comp. Endocrinol.">
        <title>Characterization of hyperglycemic and molt-inhibiting activity from sinus glands of the penaeid shrimp Penaeus vannamei.</title>
        <authorList>
            <person name="Sefiani M."/>
            <person name="Le Caer J.-P."/>
            <person name="Soyez D."/>
        </authorList>
    </citation>
    <scope>PROTEIN SEQUENCE OF 7-44</scope>
    <scope>MASS SPECTROMETRY</scope>
</reference>
<keyword id="KW-0027">Amidation</keyword>
<keyword id="KW-0119">Carbohydrate metabolism</keyword>
<keyword id="KW-0165">Cleavage on pair of basic residues</keyword>
<keyword id="KW-0903">Direct protein sequencing</keyword>
<keyword id="KW-1015">Disulfide bond</keyword>
<keyword id="KW-0313">Glucose metabolism</keyword>
<keyword id="KW-0372">Hormone</keyword>
<keyword id="KW-0527">Neuropeptide</keyword>
<keyword id="KW-0964">Secreted</keyword>
<comment type="function">
    <text>Hormone found in the sinus gland of isopods and decapods which controls the blood sugar level. Has a secretagogue action over the amylase released from the midgut gland. May act as a stress hormone and may be involved in the control of molting and reproduction.</text>
</comment>
<comment type="subcellular location">
    <subcellularLocation>
        <location>Secreted</location>
    </subcellularLocation>
</comment>
<comment type="tissue specificity">
    <text>Produced by the medulla terminalis X-organ in the eyestalks and transported to the sinus gland where they are stored and released.</text>
</comment>
<comment type="mass spectrometry">
    <molecule>Crustacean hyperglycemic hormone</molecule>
</comment>
<comment type="similarity">
    <text evidence="4">Belongs to the arthropod CHH/MIH/GIH/VIH hormone family.</text>
</comment>
<protein>
    <recommendedName>
        <fullName>Crustacean hyperglycemic hormones</fullName>
    </recommendedName>
    <component>
        <recommendedName>
            <fullName>CHH precursor-related peptide</fullName>
            <shortName>CPRP</shortName>
        </recommendedName>
    </component>
    <component>
        <recommendedName>
            <fullName>Crustacean hyperglycemic hormone</fullName>
            <shortName>CHH</shortName>
        </recommendedName>
    </component>
</protein>
<sequence>AGLTKRSLFDPSCTGVFDRQLLRRLRRVCDDCFNVFREPNVSTECRSNCYNNEVFRQCMEYLLPPHLHEEHRLAVQMVGK</sequence>
<name>CHH_PENVA</name>
<evidence type="ECO:0000250" key="1"/>
<evidence type="ECO:0000255" key="2"/>
<evidence type="ECO:0000269" key="3">
    <source>
    </source>
</evidence>
<evidence type="ECO:0000305" key="4"/>
<proteinExistence type="evidence at protein level"/>
<accession>Q26181</accession>
<dbReference type="EMBL" id="X99731">
    <property type="protein sequence ID" value="CAA68067.1"/>
    <property type="molecule type" value="mRNA"/>
</dbReference>
<dbReference type="SMR" id="Q26181"/>
<dbReference type="EnsemblMetazoa" id="XM_027353902.1">
    <property type="protein sequence ID" value="XP_027209703.1"/>
    <property type="gene ID" value="LOC113803174"/>
</dbReference>
<dbReference type="OrthoDB" id="6365952at2759"/>
<dbReference type="GO" id="GO:0005576">
    <property type="term" value="C:extracellular region"/>
    <property type="evidence" value="ECO:0007669"/>
    <property type="project" value="UniProtKB-SubCell"/>
</dbReference>
<dbReference type="GO" id="GO:0005184">
    <property type="term" value="F:neuropeptide hormone activity"/>
    <property type="evidence" value="ECO:0007669"/>
    <property type="project" value="InterPro"/>
</dbReference>
<dbReference type="GO" id="GO:0007623">
    <property type="term" value="P:circadian rhythm"/>
    <property type="evidence" value="ECO:0007669"/>
    <property type="project" value="TreeGrafter"/>
</dbReference>
<dbReference type="GO" id="GO:0006006">
    <property type="term" value="P:glucose metabolic process"/>
    <property type="evidence" value="ECO:0007669"/>
    <property type="project" value="UniProtKB-KW"/>
</dbReference>
<dbReference type="GO" id="GO:0007218">
    <property type="term" value="P:neuropeptide signaling pathway"/>
    <property type="evidence" value="ECO:0007669"/>
    <property type="project" value="UniProtKB-KW"/>
</dbReference>
<dbReference type="Gene3D" id="1.10.2010.10">
    <property type="entry name" value="Crustacean CHH/MIH/GIH neurohormone"/>
    <property type="match status" value="1"/>
</dbReference>
<dbReference type="InterPro" id="IPR018251">
    <property type="entry name" value="Crust_neurhormone_CS"/>
</dbReference>
<dbReference type="InterPro" id="IPR031098">
    <property type="entry name" value="Crust_neurohorm"/>
</dbReference>
<dbReference type="InterPro" id="IPR035957">
    <property type="entry name" value="Crust_neurohorm_sf"/>
</dbReference>
<dbReference type="InterPro" id="IPR001166">
    <property type="entry name" value="Hyperglycemic"/>
</dbReference>
<dbReference type="InterPro" id="IPR000346">
    <property type="entry name" value="Hyperglycemic1"/>
</dbReference>
<dbReference type="PANTHER" id="PTHR35981">
    <property type="entry name" value="ION TRANSPORT PEPTIDE, ISOFORM C"/>
    <property type="match status" value="1"/>
</dbReference>
<dbReference type="PANTHER" id="PTHR35981:SF2">
    <property type="entry name" value="ION TRANSPORT PEPTIDE, ISOFORM C"/>
    <property type="match status" value="1"/>
</dbReference>
<dbReference type="Pfam" id="PF01147">
    <property type="entry name" value="Crust_neurohorm"/>
    <property type="match status" value="1"/>
</dbReference>
<dbReference type="PRINTS" id="PR00548">
    <property type="entry name" value="HYPRGLYCEMC1"/>
</dbReference>
<dbReference type="PRINTS" id="PR00550">
    <property type="entry name" value="HYPRGLYCEMIC"/>
</dbReference>
<dbReference type="SUPFAM" id="SSF81778">
    <property type="entry name" value="Crustacean CHH/MIH/GIH neurohormone"/>
    <property type="match status" value="1"/>
</dbReference>
<dbReference type="PROSITE" id="PS01250">
    <property type="entry name" value="CHH_MIH_GIH"/>
    <property type="match status" value="1"/>
</dbReference>
<feature type="peptide" id="PRO_0000019071" description="CHH precursor-related peptide">
    <location>
        <begin position="1" status="less than"/>
        <end position="4"/>
    </location>
</feature>
<feature type="peptide" id="PRO_0000019072" description="Crustacean hyperglycemic hormone">
    <location>
        <begin position="7"/>
        <end position="78"/>
    </location>
</feature>
<feature type="modified residue" description="Valine amide" evidence="2">
    <location>
        <position position="78"/>
    </location>
</feature>
<feature type="disulfide bond" evidence="1">
    <location>
        <begin position="13"/>
        <end position="49"/>
    </location>
</feature>
<feature type="disulfide bond" evidence="1">
    <location>
        <begin position="29"/>
        <end position="45"/>
    </location>
</feature>
<feature type="disulfide bond" evidence="1">
    <location>
        <begin position="32"/>
        <end position="58"/>
    </location>
</feature>
<feature type="sequence conflict" description="In Ref. 2; AA sequence." evidence="4" ref="2">
    <original>R</original>
    <variation>G</variation>
    <location>
        <position position="26"/>
    </location>
</feature>
<feature type="sequence conflict" description="In Ref. 2; AA sequence." evidence="4" ref="2">
    <original>S</original>
    <variation>A</variation>
    <location>
        <position position="42"/>
    </location>
</feature>
<feature type="sequence conflict" description="In Ref. 2; AA sequence." evidence="4" ref="2">
    <original>E</original>
    <variation>N</variation>
    <location>
        <position position="44"/>
    </location>
</feature>
<feature type="non-terminal residue">
    <location>
        <position position="1"/>
    </location>
</feature>
<organism>
    <name type="scientific">Penaeus vannamei</name>
    <name type="common">Whiteleg shrimp</name>
    <name type="synonym">Litopenaeus vannamei</name>
    <dbReference type="NCBI Taxonomy" id="6689"/>
    <lineage>
        <taxon>Eukaryota</taxon>
        <taxon>Metazoa</taxon>
        <taxon>Ecdysozoa</taxon>
        <taxon>Arthropoda</taxon>
        <taxon>Crustacea</taxon>
        <taxon>Multicrustacea</taxon>
        <taxon>Malacostraca</taxon>
        <taxon>Eumalacostraca</taxon>
        <taxon>Eucarida</taxon>
        <taxon>Decapoda</taxon>
        <taxon>Dendrobranchiata</taxon>
        <taxon>Penaeoidea</taxon>
        <taxon>Penaeidae</taxon>
        <taxon>Penaeus</taxon>
    </lineage>
</organism>